<name>UCDD_ASPUT</name>
<dbReference type="EC" id="1.14.-.-" evidence="2"/>
<dbReference type="EMBL" id="JOMC01000221">
    <property type="protein sequence ID" value="KIA75359.1"/>
    <property type="molecule type" value="Genomic_DNA"/>
</dbReference>
<dbReference type="SMR" id="A0A0C1EFC5"/>
<dbReference type="Proteomes" id="UP000053475">
    <property type="component" value="Unassembled WGS sequence"/>
</dbReference>
<dbReference type="GO" id="GO:0071949">
    <property type="term" value="F:FAD binding"/>
    <property type="evidence" value="ECO:0007669"/>
    <property type="project" value="InterPro"/>
</dbReference>
<dbReference type="GO" id="GO:0016709">
    <property type="term" value="F:oxidoreductase activity, acting on paired donors, with incorporation or reduction of molecular oxygen, NAD(P)H as one donor, and incorporation of one atom of oxygen"/>
    <property type="evidence" value="ECO:0007669"/>
    <property type="project" value="UniProtKB-ARBA"/>
</dbReference>
<dbReference type="GO" id="GO:0009058">
    <property type="term" value="P:biosynthetic process"/>
    <property type="evidence" value="ECO:0007669"/>
    <property type="project" value="UniProtKB-ARBA"/>
</dbReference>
<dbReference type="Gene3D" id="3.40.30.20">
    <property type="match status" value="1"/>
</dbReference>
<dbReference type="Gene3D" id="3.30.9.10">
    <property type="entry name" value="D-Amino Acid Oxidase, subunit A, domain 2"/>
    <property type="match status" value="1"/>
</dbReference>
<dbReference type="Gene3D" id="3.50.50.60">
    <property type="entry name" value="FAD/NAD(P)-binding domain"/>
    <property type="match status" value="1"/>
</dbReference>
<dbReference type="InterPro" id="IPR002938">
    <property type="entry name" value="FAD-bd"/>
</dbReference>
<dbReference type="InterPro" id="IPR036188">
    <property type="entry name" value="FAD/NAD-bd_sf"/>
</dbReference>
<dbReference type="InterPro" id="IPR038220">
    <property type="entry name" value="PHOX_C_sf"/>
</dbReference>
<dbReference type="InterPro" id="IPR050641">
    <property type="entry name" value="RIFMO-like"/>
</dbReference>
<dbReference type="InterPro" id="IPR036249">
    <property type="entry name" value="Thioredoxin-like_sf"/>
</dbReference>
<dbReference type="PANTHER" id="PTHR43004:SF15">
    <property type="entry name" value="MONOOXYGENASE, PUTATIVE (AFU_ORTHOLOGUE AFUA_6G03030)-RELATED"/>
    <property type="match status" value="1"/>
</dbReference>
<dbReference type="PANTHER" id="PTHR43004">
    <property type="entry name" value="TRK SYSTEM POTASSIUM UPTAKE PROTEIN"/>
    <property type="match status" value="1"/>
</dbReference>
<dbReference type="Pfam" id="PF01494">
    <property type="entry name" value="FAD_binding_3"/>
    <property type="match status" value="1"/>
</dbReference>
<dbReference type="PRINTS" id="PR00420">
    <property type="entry name" value="RNGMNOXGNASE"/>
</dbReference>
<dbReference type="SUPFAM" id="SSF54373">
    <property type="entry name" value="FAD-linked reductases, C-terminal domain"/>
    <property type="match status" value="1"/>
</dbReference>
<dbReference type="SUPFAM" id="SSF51905">
    <property type="entry name" value="FAD/NAD(P)-binding domain"/>
    <property type="match status" value="1"/>
</dbReference>
<dbReference type="SUPFAM" id="SSF52833">
    <property type="entry name" value="Thioredoxin-like"/>
    <property type="match status" value="1"/>
</dbReference>
<proteinExistence type="evidence at protein level"/>
<evidence type="ECO:0000250" key="1">
    <source>
        <dbReference type="UniProtKB" id="Q6SSJ6"/>
    </source>
</evidence>
<evidence type="ECO:0000269" key="2">
    <source>
    </source>
</evidence>
<evidence type="ECO:0000303" key="3">
    <source>
    </source>
</evidence>
<evidence type="ECO:0000305" key="4"/>
<organism>
    <name type="scientific">Aspergillus ustus</name>
    <dbReference type="NCBI Taxonomy" id="40382"/>
    <lineage>
        <taxon>Eukaryota</taxon>
        <taxon>Fungi</taxon>
        <taxon>Dikarya</taxon>
        <taxon>Ascomycota</taxon>
        <taxon>Pezizomycotina</taxon>
        <taxon>Eurotiomycetes</taxon>
        <taxon>Eurotiomycetidae</taxon>
        <taxon>Eurotiales</taxon>
        <taxon>Aspergillaceae</taxon>
        <taxon>Aspergillus</taxon>
        <taxon>Aspergillus subgen. Nidulantes</taxon>
    </lineage>
</organism>
<keyword id="KW-0274">FAD</keyword>
<keyword id="KW-0285">Flavoprotein</keyword>
<keyword id="KW-0521">NADP</keyword>
<keyword id="KW-0560">Oxidoreductase</keyword>
<keyword id="KW-1185">Reference proteome</keyword>
<sequence length="649" mass="71978">MAADDIDVYGQQEALRRLYERALTTPLPNYAAPTSFELNSAGIASTETYDVIITGGGPAGLTLAVLLAHQGLRAPGAVLCVERRPHPLLAGQADGLTCRTMEMFKELGLYDEVLKVGHEVAEMVMWAELPGTKGIQRVTHQASNENMTPSRVASLVACSQGQIERILELELASYAPGTLKRGAEIIHVEMDARMDTKYPVVVSIRDESGHVTFARCRFLVGADGAHSVVRKCMGISMVGDLSDRVWGVIDFPAETDFPDIRRSGHVHSALGSVMHFPREQSADGDWLTRFYVDMDEANAGNMDSQSAQVGPLTPQHILDRISRTFHPYHLQIKPGTKVEWFSKYSVRRCIASDYIRHDFQGLPRVLLVGDACHTHSPKIGQGMNVSMADSYNLAWKLAHVLLGISSDPRSILESYASERYPVGRQLVEIDKAWNTLEWNTKITGREENYQDTRKDLLRTISGFVSGYGIQYSSGYLIRTARYLNEECSLQAGSRLQHTVMSRFADGLTVDLHDEIVPNGRWKLLVFATQYLSCQKGPFAQAVRSIFENLIPIFLPGCITPIIILPDLVSNVDNGGTSLTRSVDWAVFPSRIKCMAEMKTYVSQRAYDGYRISCHEGAVVLLRPDGVISIIDDLHATEVTSFLKTVVRTL</sequence>
<feature type="chain" id="PRO_0000460398" description="Flavin-dependent oxygenase ucdD">
    <location>
        <begin position="1"/>
        <end position="649"/>
    </location>
</feature>
<feature type="binding site" evidence="1">
    <location>
        <position position="92"/>
    </location>
    <ligand>
        <name>FAD</name>
        <dbReference type="ChEBI" id="CHEBI:57692"/>
    </ligand>
</feature>
<feature type="binding site" evidence="1">
    <location>
        <position position="185"/>
    </location>
    <ligand>
        <name>FAD</name>
        <dbReference type="ChEBI" id="CHEBI:57692"/>
    </ligand>
</feature>
<feature type="binding site" evidence="1">
    <location>
        <position position="344"/>
    </location>
    <ligand>
        <name>FAD</name>
        <dbReference type="ChEBI" id="CHEBI:57692"/>
    </ligand>
</feature>
<feature type="binding site" evidence="1">
    <location>
        <position position="370"/>
    </location>
    <ligand>
        <name>FAD</name>
        <dbReference type="ChEBI" id="CHEBI:57692"/>
    </ligand>
</feature>
<feature type="binding site" evidence="1">
    <location>
        <position position="386"/>
    </location>
    <ligand>
        <name>FAD</name>
        <dbReference type="ChEBI" id="CHEBI:57692"/>
    </ligand>
</feature>
<comment type="function">
    <text evidence="2">Nonribosomal peptide synthetase that mediates the biosynthesis of usterphenyllins and uscandidusins, p-terphenyl derivatives (PubMed:37607357). Within the pathway, ucdD catalyzes the formation of 3,15-dihydroxyterphenyllin via dihydroxylation at C-3 of ring A and C-15 of ring C of the terphenyllin intermediate (PubMed:37607357). The pathway begin with the biosynthesis of 4-hydroxyphenylpyruvate (HPPA) from L-tyrosine, possibly by the aminotransferase ucdG. The nonribosomal peptide synthetase ucdA then condenses two HPPA units to produce atromentin. The key step in this pathway is the reduction and dehydration of atromentin to form a terphenyl triol intermediate, performed by the NAD-dependent dehydrogenase ucdB. Further O-methylation by the methyltransferase ucdC forms terphenyllin carrying two methoxy moieties at C-9 and C-12, and subsequent dihydroxylation at C-3 of ring A and C-15 of ring C by the flavin-dependent oxygenase ucdD leads to 3,15-dihydroxyterphenyllin. Prenylation by ucdE at position C-5 of ring A forms usterphenyllin B, and is followed by a second prenylation at position C-14 of ring C to form usterphenyllin A. The following furan ring formation that leads to uscandidusins A and B was proven to be an unexpected spontaneous non-enzymatic reaction (PubMed:37607357).</text>
</comment>
<comment type="cofactor">
    <cofactor evidence="1">
        <name>FAD</name>
        <dbReference type="ChEBI" id="CHEBI:57692"/>
    </cofactor>
</comment>
<comment type="pathway">
    <text evidence="2">Secondary metabolite biosynthesis.</text>
</comment>
<comment type="subunit">
    <text evidence="1">Homodimer.</text>
</comment>
<comment type="disruption phenotype">
    <text evidence="2">Impairs the production of usterphenyllins and uscandidusins and leads to the accumulation of the terphenyllin intermediate.</text>
</comment>
<comment type="similarity">
    <text evidence="4">Belongs to the PheA/TfdB FAD monooxygenase family.</text>
</comment>
<reference key="1">
    <citation type="submission" date="2014-11" db="EMBL/GenBank/DDBJ databases">
        <title>Genomics derived discovery of secondary metabolites biosynthetic gene clusters in Aspergillus ustus.</title>
        <authorList>
            <person name="Pi B."/>
            <person name="Dai F."/>
            <person name="Song X."/>
            <person name="Zhu C."/>
            <person name="Li H."/>
            <person name="Yu D."/>
        </authorList>
    </citation>
    <scope>NUCLEOTIDE SEQUENCE [LARGE SCALE GENOMIC DNA]</scope>
    <source>
        <strain>3.3904</strain>
    </source>
</reference>
<reference key="2">
    <citation type="journal article" date="2023" name="Org. Lett.">
        <title>Biosynthesis of p-terphenyls in Aspergillus ustus implies enzymatic reductive dehydration and spontaneous dibenzofuran formation.</title>
        <authorList>
            <person name="Janzen D.J."/>
            <person name="Zhou J."/>
            <person name="Li S.M."/>
        </authorList>
    </citation>
    <scope>FUNCTION</scope>
    <scope>CATALYTIC ACTIVITY</scope>
    <scope>DISRUPTION PHENOTYPE</scope>
    <scope>PATHWAY</scope>
</reference>
<protein>
    <recommendedName>
        <fullName evidence="3">Flavin-dependent oxygenase ucdD</fullName>
        <ecNumber evidence="2">1.14.-.-</ecNumber>
    </recommendedName>
    <alternativeName>
        <fullName evidence="3">Uscandidusin biosynthesis cluster protein D</fullName>
    </alternativeName>
</protein>
<accession>A0A0C1EFC5</accession>
<gene>
    <name evidence="3" type="primary">ucdD</name>
    <name type="ORF">HK57_00188</name>
</gene>